<reference key="1">
    <citation type="journal article" date="2009" name="ISME J.">
        <title>The genome sequence of the psychrophilic archaeon, Methanococcoides burtonii: the role of genome evolution in cold adaptation.</title>
        <authorList>
            <person name="Allen M.A."/>
            <person name="Lauro F.M."/>
            <person name="Williams T.J."/>
            <person name="Burg D."/>
            <person name="Siddiqui K.S."/>
            <person name="De Francisci D."/>
            <person name="Chong K.W."/>
            <person name="Pilak O."/>
            <person name="Chew H.H."/>
            <person name="De Maere M.Z."/>
            <person name="Ting L."/>
            <person name="Katrib M."/>
            <person name="Ng C."/>
            <person name="Sowers K.R."/>
            <person name="Galperin M.Y."/>
            <person name="Anderson I.J."/>
            <person name="Ivanova N."/>
            <person name="Dalin E."/>
            <person name="Martinez M."/>
            <person name="Lapidus A."/>
            <person name="Hauser L."/>
            <person name="Land M."/>
            <person name="Thomas T."/>
            <person name="Cavicchioli R."/>
        </authorList>
    </citation>
    <scope>NUCLEOTIDE SEQUENCE [LARGE SCALE GENOMIC DNA]</scope>
    <source>
        <strain>DSM 6242 / NBRC 107633 / OCM 468 / ACE-M</strain>
    </source>
</reference>
<comment type="function">
    <text evidence="1">Catalyzes the deamination of three SAM-derived enzymatic products, namely 5'-deoxyadenosine, S-adenosyl-L-homocysteine, and 5'-methylthioadenosine, to produce the inosine analogs. Can also deaminate adenosine. The preferred substrate for this enzyme is 5'-deoxyadenosine, but all these substrates are efficiently deaminated. Likely functions in a S-adenosyl-L-methionine (SAM) recycling pathway from S-adenosyl-L-homocysteine (SAH) produced from SAM-dependent methylation reactions. May also be involved in the recycling of 5'-deoxyadenosine, whereupon the 5'-deoxyribose moiety of 5'-deoxyinosine is further metabolized to deoxyhexoses used for the biosynthesis of aromatic amino acids in methanogens.</text>
</comment>
<comment type="catalytic activity">
    <reaction evidence="1">
        <text>5'-deoxyadenosine + H2O + H(+) = 5'-deoxyinosine + NH4(+)</text>
        <dbReference type="Rhea" id="RHEA:42892"/>
        <dbReference type="ChEBI" id="CHEBI:15377"/>
        <dbReference type="ChEBI" id="CHEBI:15378"/>
        <dbReference type="ChEBI" id="CHEBI:17319"/>
        <dbReference type="ChEBI" id="CHEBI:28938"/>
        <dbReference type="ChEBI" id="CHEBI:82775"/>
        <dbReference type="EC" id="3.5.4.41"/>
    </reaction>
    <physiologicalReaction direction="left-to-right" evidence="1">
        <dbReference type="Rhea" id="RHEA:42893"/>
    </physiologicalReaction>
</comment>
<comment type="catalytic activity">
    <reaction evidence="1">
        <text>S-adenosyl-L-homocysteine + H2O + H(+) = S-inosyl-L-homocysteine + NH4(+)</text>
        <dbReference type="Rhea" id="RHEA:20716"/>
        <dbReference type="ChEBI" id="CHEBI:15377"/>
        <dbReference type="ChEBI" id="CHEBI:15378"/>
        <dbReference type="ChEBI" id="CHEBI:28938"/>
        <dbReference type="ChEBI" id="CHEBI:57856"/>
        <dbReference type="ChEBI" id="CHEBI:57985"/>
        <dbReference type="EC" id="3.5.4.28"/>
    </reaction>
    <physiologicalReaction direction="left-to-right" evidence="1">
        <dbReference type="Rhea" id="RHEA:20717"/>
    </physiologicalReaction>
</comment>
<comment type="catalytic activity">
    <reaction evidence="1">
        <text>S-methyl-5'-thioadenosine + H2O + H(+) = S-methyl-5'-thioinosine + NH4(+)</text>
        <dbReference type="Rhea" id="RHEA:25025"/>
        <dbReference type="ChEBI" id="CHEBI:15377"/>
        <dbReference type="ChEBI" id="CHEBI:15378"/>
        <dbReference type="ChEBI" id="CHEBI:17509"/>
        <dbReference type="ChEBI" id="CHEBI:28938"/>
        <dbReference type="ChEBI" id="CHEBI:48595"/>
        <dbReference type="EC" id="3.5.4.31"/>
    </reaction>
    <physiologicalReaction direction="left-to-right" evidence="1">
        <dbReference type="Rhea" id="RHEA:25026"/>
    </physiologicalReaction>
</comment>
<comment type="catalytic activity">
    <reaction evidence="1">
        <text>adenosine + H2O + H(+) = inosine + NH4(+)</text>
        <dbReference type="Rhea" id="RHEA:24408"/>
        <dbReference type="ChEBI" id="CHEBI:15377"/>
        <dbReference type="ChEBI" id="CHEBI:15378"/>
        <dbReference type="ChEBI" id="CHEBI:16335"/>
        <dbReference type="ChEBI" id="CHEBI:17596"/>
        <dbReference type="ChEBI" id="CHEBI:28938"/>
        <dbReference type="EC" id="3.5.4.4"/>
    </reaction>
    <physiologicalReaction direction="left-to-right" evidence="1">
        <dbReference type="Rhea" id="RHEA:24409"/>
    </physiologicalReaction>
</comment>
<comment type="cofactor">
    <cofactor evidence="1">
        <name>Zn(2+)</name>
        <dbReference type="ChEBI" id="CHEBI:29105"/>
    </cofactor>
    <text evidence="1">Binds 1 zinc ion per subunit.</text>
</comment>
<comment type="pathway">
    <text evidence="1">Amino-acid biosynthesis; S-adenosyl-L-methionine biosynthesis.</text>
</comment>
<comment type="subunit">
    <text evidence="1">Homotetramer.</text>
</comment>
<comment type="miscellaneous">
    <text evidence="1">SAH is a product of SAM methyltransferases and is known to be a feedback inhibitor of these enzymes. As a result of this inhibition, organisms have evolved efficient enzymes to metabolize SAH via different pathways. The pathway found in methanogens differs from the canonical pathway, it uses the deamination of S-adenosyl-L-homocysteine to form S-inosyl-L-homocysteine for the regeneration of SAM from S-adenosyl-L-homocysteine. 5'-deoxyadenosine is a radical SAM enzyme reaction product which strongly inhibits radical SAM enzymes. A pathway for removing this product must be present in methanogens where the MTA/SAH nucleosidase which normally metabolizes this compound is absent.</text>
</comment>
<comment type="similarity">
    <text evidence="1">Belongs to the metallo-dependent hydrolases superfamily. MTA/SAH deaminase family.</text>
</comment>
<evidence type="ECO:0000255" key="1">
    <source>
        <dbReference type="HAMAP-Rule" id="MF_01281"/>
    </source>
</evidence>
<feature type="chain" id="PRO_0000312470" description="5'-deoxyadenosine deaminase">
    <location>
        <begin position="1"/>
        <end position="434"/>
    </location>
</feature>
<feature type="binding site" evidence="1">
    <location>
        <position position="63"/>
    </location>
    <ligand>
        <name>Zn(2+)</name>
        <dbReference type="ChEBI" id="CHEBI:29105"/>
    </ligand>
</feature>
<feature type="binding site" evidence="1">
    <location>
        <position position="65"/>
    </location>
    <ligand>
        <name>Zn(2+)</name>
        <dbReference type="ChEBI" id="CHEBI:29105"/>
    </ligand>
</feature>
<feature type="binding site" evidence="1">
    <location>
        <position position="92"/>
    </location>
    <ligand>
        <name>substrate</name>
    </ligand>
</feature>
<feature type="binding site" evidence="1">
    <location>
        <position position="184"/>
    </location>
    <ligand>
        <name>substrate</name>
    </ligand>
</feature>
<feature type="binding site" evidence="1">
    <location>
        <position position="211"/>
    </location>
    <ligand>
        <name>Zn(2+)</name>
        <dbReference type="ChEBI" id="CHEBI:29105"/>
    </ligand>
</feature>
<feature type="binding site" evidence="1">
    <location>
        <position position="214"/>
    </location>
    <ligand>
        <name>substrate</name>
    </ligand>
</feature>
<feature type="binding site" evidence="1">
    <location>
        <position position="299"/>
    </location>
    <ligand>
        <name>substrate</name>
    </ligand>
</feature>
<feature type="binding site" evidence="1">
    <location>
        <position position="299"/>
    </location>
    <ligand>
        <name>Zn(2+)</name>
        <dbReference type="ChEBI" id="CHEBI:29105"/>
    </ligand>
</feature>
<keyword id="KW-0378">Hydrolase</keyword>
<keyword id="KW-0479">Metal-binding</keyword>
<keyword id="KW-0862">Zinc</keyword>
<dbReference type="EC" id="3.5.4.41" evidence="1"/>
<dbReference type="EC" id="3.5.4.31" evidence="1"/>
<dbReference type="EC" id="3.5.4.4" evidence="1"/>
<dbReference type="EC" id="3.5.4.28" evidence="1"/>
<dbReference type="EMBL" id="CP000300">
    <property type="protein sequence ID" value="ABE52105.1"/>
    <property type="molecule type" value="Genomic_DNA"/>
</dbReference>
<dbReference type="RefSeq" id="WP_011499251.1">
    <property type="nucleotide sequence ID" value="NC_007955.1"/>
</dbReference>
<dbReference type="SMR" id="Q12WS1"/>
<dbReference type="STRING" id="259564.Mbur_1182"/>
<dbReference type="GeneID" id="3998338"/>
<dbReference type="KEGG" id="mbu:Mbur_1182"/>
<dbReference type="HOGENOM" id="CLU_012358_2_1_2"/>
<dbReference type="OrthoDB" id="372084at2157"/>
<dbReference type="UniPathway" id="UPA00315"/>
<dbReference type="Proteomes" id="UP000001979">
    <property type="component" value="Chromosome"/>
</dbReference>
<dbReference type="GO" id="GO:0090613">
    <property type="term" value="F:5'-deoxyadenosine deaminase activity"/>
    <property type="evidence" value="ECO:0007669"/>
    <property type="project" value="UniProtKB-UniRule"/>
</dbReference>
<dbReference type="GO" id="GO:0090614">
    <property type="term" value="F:5'-methylthioadenosine deaminase activity"/>
    <property type="evidence" value="ECO:0007669"/>
    <property type="project" value="UniProtKB-EC"/>
</dbReference>
<dbReference type="GO" id="GO:0004000">
    <property type="term" value="F:adenosine deaminase activity"/>
    <property type="evidence" value="ECO:0007669"/>
    <property type="project" value="UniProtKB-UniRule"/>
</dbReference>
<dbReference type="GO" id="GO:0046872">
    <property type="term" value="F:metal ion binding"/>
    <property type="evidence" value="ECO:0007669"/>
    <property type="project" value="UniProtKB-KW"/>
</dbReference>
<dbReference type="GO" id="GO:0050270">
    <property type="term" value="F:S-adenosylhomocysteine deaminase activity"/>
    <property type="evidence" value="ECO:0007669"/>
    <property type="project" value="UniProtKB-EC"/>
</dbReference>
<dbReference type="GO" id="GO:0006556">
    <property type="term" value="P:S-adenosylmethionine biosynthetic process"/>
    <property type="evidence" value="ECO:0007669"/>
    <property type="project" value="UniProtKB-UniRule"/>
</dbReference>
<dbReference type="CDD" id="cd01298">
    <property type="entry name" value="ATZ_TRZ_like"/>
    <property type="match status" value="1"/>
</dbReference>
<dbReference type="FunFam" id="3.20.20.140:FF:000014">
    <property type="entry name" value="5-methylthioadenosine/S-adenosylhomocysteine deaminase"/>
    <property type="match status" value="1"/>
</dbReference>
<dbReference type="Gene3D" id="3.20.20.140">
    <property type="entry name" value="Metal-dependent hydrolases"/>
    <property type="match status" value="1"/>
</dbReference>
<dbReference type="Gene3D" id="2.30.40.10">
    <property type="entry name" value="Urease, subunit C, domain 1"/>
    <property type="match status" value="1"/>
</dbReference>
<dbReference type="HAMAP" id="MF_01281">
    <property type="entry name" value="MTA_SAH_deamin"/>
    <property type="match status" value="1"/>
</dbReference>
<dbReference type="InterPro" id="IPR006680">
    <property type="entry name" value="Amidohydro-rel"/>
</dbReference>
<dbReference type="InterPro" id="IPR023512">
    <property type="entry name" value="Deaminase_MtaD/DadD"/>
</dbReference>
<dbReference type="InterPro" id="IPR011059">
    <property type="entry name" value="Metal-dep_hydrolase_composite"/>
</dbReference>
<dbReference type="InterPro" id="IPR032466">
    <property type="entry name" value="Metal_Hydrolase"/>
</dbReference>
<dbReference type="InterPro" id="IPR050287">
    <property type="entry name" value="MTA/SAH_deaminase"/>
</dbReference>
<dbReference type="NCBIfam" id="NF004701">
    <property type="entry name" value="PRK06038.1"/>
    <property type="match status" value="1"/>
</dbReference>
<dbReference type="PANTHER" id="PTHR43794:SF11">
    <property type="entry name" value="AMIDOHYDROLASE-RELATED DOMAIN-CONTAINING PROTEIN"/>
    <property type="match status" value="1"/>
</dbReference>
<dbReference type="PANTHER" id="PTHR43794">
    <property type="entry name" value="AMINOHYDROLASE SSNA-RELATED"/>
    <property type="match status" value="1"/>
</dbReference>
<dbReference type="Pfam" id="PF01979">
    <property type="entry name" value="Amidohydro_1"/>
    <property type="match status" value="1"/>
</dbReference>
<dbReference type="SUPFAM" id="SSF51338">
    <property type="entry name" value="Composite domain of metallo-dependent hydrolases"/>
    <property type="match status" value="1"/>
</dbReference>
<dbReference type="SUPFAM" id="SSF51556">
    <property type="entry name" value="Metallo-dependent hydrolases"/>
    <property type="match status" value="1"/>
</dbReference>
<name>DADD_METBU</name>
<proteinExistence type="inferred from homology"/>
<gene>
    <name evidence="1" type="primary">dadD</name>
    <name type="ordered locus">Mbur_1182</name>
</gene>
<organism>
    <name type="scientific">Methanococcoides burtonii (strain DSM 6242 / NBRC 107633 / OCM 468 / ACE-M)</name>
    <dbReference type="NCBI Taxonomy" id="259564"/>
    <lineage>
        <taxon>Archaea</taxon>
        <taxon>Methanobacteriati</taxon>
        <taxon>Methanobacteriota</taxon>
        <taxon>Stenosarchaea group</taxon>
        <taxon>Methanomicrobia</taxon>
        <taxon>Methanosarcinales</taxon>
        <taxon>Methanosarcinaceae</taxon>
        <taxon>Methanococcoides</taxon>
    </lineage>
</organism>
<accession>Q12WS1</accession>
<sequence length="434" mass="47118">MADIIIKNGYVLTMDPEVDDIPNGVVVIEGGKIVEVAETTSATANTVIDAQGGVVMPGFVNTHTHAGMTLFRGYADDLPLAQWLQEHIWPAEAELTASDVLAGTRLACLEMIKSGTIAFADMYFFMEEVGKAVEECGLRAALSYGMIELWDDEKGTNELKKGREFVKEWNGKAEGRISVMYGPHAPNTCSKEFLSKVKEQAIADNVKIHIHVLETEAELNQMKEQYGMCSVNMLDTIDFFGPGVLAAHCIWLSDGDMDILADNNVNIAHNPVSNMKLASGVAPVMKLLDKGANVCLGTDGCASNNNLDMFDEMKTAALLQKVDTMDPTALPAKQVLEMATVNGAKALDINSGVLRKDYNADVIIIDMNKAHLSPLFDVPSQLVYSATGNDVRTTIVNGVVLMDERKVLCMNEQQVINDAKQAASDLVSRVDAKN</sequence>
<protein>
    <recommendedName>
        <fullName evidence="1">5'-deoxyadenosine deaminase</fullName>
        <shortName evidence="1">5'-dA deaminase</shortName>
        <ecNumber evidence="1">3.5.4.41</ecNumber>
    </recommendedName>
    <alternativeName>
        <fullName evidence="1">5'-methylthioadenosine deaminase</fullName>
        <shortName evidence="1">MTA deaminase</shortName>
        <ecNumber evidence="1">3.5.4.31</ecNumber>
    </alternativeName>
    <alternativeName>
        <fullName evidence="1">Adenosine deaminase</fullName>
        <ecNumber evidence="1">3.5.4.4</ecNumber>
    </alternativeName>
    <alternativeName>
        <fullName evidence="1">S-adenosylhomocysteine deaminase</fullName>
        <shortName evidence="1">SAH deaminase</shortName>
        <ecNumber evidence="1">3.5.4.28</ecNumber>
    </alternativeName>
</protein>